<comment type="function">
    <text evidence="1">Probably acts as a transcriptional activator. Binds to the GCC-box pathogenesis-related promoter element. May be involved in the regulation of gene expression by stress factors and by components of stress signal transduction pathways (By similarity).</text>
</comment>
<comment type="subcellular location">
    <subcellularLocation>
        <location evidence="3">Nucleus</location>
    </subcellularLocation>
</comment>
<comment type="similarity">
    <text evidence="3">Belongs to the AP2/ERF transcription factor family. ERF subfamily.</text>
</comment>
<comment type="sequence caution" evidence="3">
    <conflict type="erroneous gene model prediction">
        <sequence resource="EMBL-CDS" id="CAA18187"/>
    </conflict>
    <text>The predicted gene At4g31060 has been split into 2 genes: At4g31060 and At4g31050.</text>
</comment>
<comment type="sequence caution" evidence="3">
    <conflict type="erroneous gene model prediction">
        <sequence resource="EMBL-CDS" id="CAB79824"/>
    </conflict>
    <text>The predicted gene At4g31060 has been split into 2 genes: At4g31060 and At4g31050.</text>
</comment>
<reference key="1">
    <citation type="submission" date="2004-02" db="EMBL/GenBank/DDBJ databases">
        <title>Molecular cloning, expression, phylogenetic and functional characterization of the Arabidopsis AP2/EREBP transcription factor family.</title>
        <authorList>
            <person name="Pan Y."/>
            <person name="Gong W."/>
            <person name="Liu D."/>
            <person name="Fu Q."/>
            <person name="Mei W.-Q."/>
            <person name="Song W.-Q."/>
            <person name="Ma L.-G."/>
            <person name="Luo J.-C."/>
            <person name="Deng X.-W."/>
            <person name="Zhu Y.-X."/>
        </authorList>
    </citation>
    <scope>NUCLEOTIDE SEQUENCE [MRNA]</scope>
</reference>
<reference key="2">
    <citation type="journal article" date="1999" name="Nature">
        <title>Sequence and analysis of chromosome 4 of the plant Arabidopsis thaliana.</title>
        <authorList>
            <person name="Mayer K.F.X."/>
            <person name="Schueller C."/>
            <person name="Wambutt R."/>
            <person name="Murphy G."/>
            <person name="Volckaert G."/>
            <person name="Pohl T."/>
            <person name="Duesterhoeft A."/>
            <person name="Stiekema W."/>
            <person name="Entian K.-D."/>
            <person name="Terryn N."/>
            <person name="Harris B."/>
            <person name="Ansorge W."/>
            <person name="Brandt P."/>
            <person name="Grivell L.A."/>
            <person name="Rieger M."/>
            <person name="Weichselgartner M."/>
            <person name="de Simone V."/>
            <person name="Obermaier B."/>
            <person name="Mache R."/>
            <person name="Mueller M."/>
            <person name="Kreis M."/>
            <person name="Delseny M."/>
            <person name="Puigdomenech P."/>
            <person name="Watson M."/>
            <person name="Schmidtheini T."/>
            <person name="Reichert B."/>
            <person name="Portetelle D."/>
            <person name="Perez-Alonso M."/>
            <person name="Boutry M."/>
            <person name="Bancroft I."/>
            <person name="Vos P."/>
            <person name="Hoheisel J."/>
            <person name="Zimmermann W."/>
            <person name="Wedler H."/>
            <person name="Ridley P."/>
            <person name="Langham S.-A."/>
            <person name="McCullagh B."/>
            <person name="Bilham L."/>
            <person name="Robben J."/>
            <person name="van der Schueren J."/>
            <person name="Grymonprez B."/>
            <person name="Chuang Y.-J."/>
            <person name="Vandenbussche F."/>
            <person name="Braeken M."/>
            <person name="Weltjens I."/>
            <person name="Voet M."/>
            <person name="Bastiaens I."/>
            <person name="Aert R."/>
            <person name="Defoor E."/>
            <person name="Weitzenegger T."/>
            <person name="Bothe G."/>
            <person name="Ramsperger U."/>
            <person name="Hilbert H."/>
            <person name="Braun M."/>
            <person name="Holzer E."/>
            <person name="Brandt A."/>
            <person name="Peters S."/>
            <person name="van Staveren M."/>
            <person name="Dirkse W."/>
            <person name="Mooijman P."/>
            <person name="Klein Lankhorst R."/>
            <person name="Rose M."/>
            <person name="Hauf J."/>
            <person name="Koetter P."/>
            <person name="Berneiser S."/>
            <person name="Hempel S."/>
            <person name="Feldpausch M."/>
            <person name="Lamberth S."/>
            <person name="Van den Daele H."/>
            <person name="De Keyser A."/>
            <person name="Buysshaert C."/>
            <person name="Gielen J."/>
            <person name="Villarroel R."/>
            <person name="De Clercq R."/>
            <person name="van Montagu M."/>
            <person name="Rogers J."/>
            <person name="Cronin A."/>
            <person name="Quail M.A."/>
            <person name="Bray-Allen S."/>
            <person name="Clark L."/>
            <person name="Doggett J."/>
            <person name="Hall S."/>
            <person name="Kay M."/>
            <person name="Lennard N."/>
            <person name="McLay K."/>
            <person name="Mayes R."/>
            <person name="Pettett A."/>
            <person name="Rajandream M.A."/>
            <person name="Lyne M."/>
            <person name="Benes V."/>
            <person name="Rechmann S."/>
            <person name="Borkova D."/>
            <person name="Bloecker H."/>
            <person name="Scharfe M."/>
            <person name="Grimm M."/>
            <person name="Loehnert T.-H."/>
            <person name="Dose S."/>
            <person name="de Haan M."/>
            <person name="Maarse A.C."/>
            <person name="Schaefer M."/>
            <person name="Mueller-Auer S."/>
            <person name="Gabel C."/>
            <person name="Fuchs M."/>
            <person name="Fartmann B."/>
            <person name="Granderath K."/>
            <person name="Dauner D."/>
            <person name="Herzl A."/>
            <person name="Neumann S."/>
            <person name="Argiriou A."/>
            <person name="Vitale D."/>
            <person name="Liguori R."/>
            <person name="Piravandi E."/>
            <person name="Massenet O."/>
            <person name="Quigley F."/>
            <person name="Clabauld G."/>
            <person name="Muendlein A."/>
            <person name="Felber R."/>
            <person name="Schnabl S."/>
            <person name="Hiller R."/>
            <person name="Schmidt W."/>
            <person name="Lecharny A."/>
            <person name="Aubourg S."/>
            <person name="Chefdor F."/>
            <person name="Cooke R."/>
            <person name="Berger C."/>
            <person name="Monfort A."/>
            <person name="Casacuberta E."/>
            <person name="Gibbons T."/>
            <person name="Weber N."/>
            <person name="Vandenbol M."/>
            <person name="Bargues M."/>
            <person name="Terol J."/>
            <person name="Torres A."/>
            <person name="Perez-Perez A."/>
            <person name="Purnelle B."/>
            <person name="Bent E."/>
            <person name="Johnson S."/>
            <person name="Tacon D."/>
            <person name="Jesse T."/>
            <person name="Heijnen L."/>
            <person name="Schwarz S."/>
            <person name="Scholler P."/>
            <person name="Heber S."/>
            <person name="Francs P."/>
            <person name="Bielke C."/>
            <person name="Frishman D."/>
            <person name="Haase D."/>
            <person name="Lemcke K."/>
            <person name="Mewes H.-W."/>
            <person name="Stocker S."/>
            <person name="Zaccaria P."/>
            <person name="Bevan M."/>
            <person name="Wilson R.K."/>
            <person name="de la Bastide M."/>
            <person name="Habermann K."/>
            <person name="Parnell L."/>
            <person name="Dedhia N."/>
            <person name="Gnoj L."/>
            <person name="Schutz K."/>
            <person name="Huang E."/>
            <person name="Spiegel L."/>
            <person name="Sekhon M."/>
            <person name="Murray J."/>
            <person name="Sheet P."/>
            <person name="Cordes M."/>
            <person name="Abu-Threideh J."/>
            <person name="Stoneking T."/>
            <person name="Kalicki J."/>
            <person name="Graves T."/>
            <person name="Harmon G."/>
            <person name="Edwards J."/>
            <person name="Latreille P."/>
            <person name="Courtney L."/>
            <person name="Cloud J."/>
            <person name="Abbott A."/>
            <person name="Scott K."/>
            <person name="Johnson D."/>
            <person name="Minx P."/>
            <person name="Bentley D."/>
            <person name="Fulton B."/>
            <person name="Miller N."/>
            <person name="Greco T."/>
            <person name="Kemp K."/>
            <person name="Kramer J."/>
            <person name="Fulton L."/>
            <person name="Mardis E."/>
            <person name="Dante M."/>
            <person name="Pepin K."/>
            <person name="Hillier L.W."/>
            <person name="Nelson J."/>
            <person name="Spieth J."/>
            <person name="Ryan E."/>
            <person name="Andrews S."/>
            <person name="Geisel C."/>
            <person name="Layman D."/>
            <person name="Du H."/>
            <person name="Ali J."/>
            <person name="Berghoff A."/>
            <person name="Jones K."/>
            <person name="Drone K."/>
            <person name="Cotton M."/>
            <person name="Joshu C."/>
            <person name="Antonoiu B."/>
            <person name="Zidanic M."/>
            <person name="Strong C."/>
            <person name="Sun H."/>
            <person name="Lamar B."/>
            <person name="Yordan C."/>
            <person name="Ma P."/>
            <person name="Zhong J."/>
            <person name="Preston R."/>
            <person name="Vil D."/>
            <person name="Shekher M."/>
            <person name="Matero A."/>
            <person name="Shah R."/>
            <person name="Swaby I.K."/>
            <person name="O'Shaughnessy A."/>
            <person name="Rodriguez M."/>
            <person name="Hoffman J."/>
            <person name="Till S."/>
            <person name="Granat S."/>
            <person name="Shohdy N."/>
            <person name="Hasegawa A."/>
            <person name="Hameed A."/>
            <person name="Lodhi M."/>
            <person name="Johnson A."/>
            <person name="Chen E."/>
            <person name="Marra M.A."/>
            <person name="Martienssen R."/>
            <person name="McCombie W.R."/>
        </authorList>
    </citation>
    <scope>NUCLEOTIDE SEQUENCE [LARGE SCALE GENOMIC DNA]</scope>
    <source>
        <strain>cv. Columbia</strain>
    </source>
</reference>
<reference key="3">
    <citation type="journal article" date="2017" name="Plant J.">
        <title>Araport11: a complete reannotation of the Arabidopsis thaliana reference genome.</title>
        <authorList>
            <person name="Cheng C.Y."/>
            <person name="Krishnakumar V."/>
            <person name="Chan A.P."/>
            <person name="Thibaud-Nissen F."/>
            <person name="Schobel S."/>
            <person name="Town C.D."/>
        </authorList>
    </citation>
    <scope>GENOME REANNOTATION</scope>
    <source>
        <strain>cv. Columbia</strain>
    </source>
</reference>
<reference key="4">
    <citation type="submission" date="2004-04" db="EMBL/GenBank/DDBJ databases">
        <title>Arabidopsis cDNA clones.</title>
        <authorList>
            <person name="Shinn P."/>
            <person name="Chen H."/>
            <person name="Cheuk R.F."/>
            <person name="Kim C.J."/>
            <person name="Ecker J.R."/>
        </authorList>
    </citation>
    <scope>NUCLEOTIDE SEQUENCE [LARGE SCALE MRNA]</scope>
    <source>
        <strain>cv. Columbia</strain>
    </source>
</reference>
<reference key="5">
    <citation type="journal article" date="2006" name="Plant Physiol.">
        <title>Genome-wide analysis of the ERF gene family in Arabidopsis and rice.</title>
        <authorList>
            <person name="Nakano T."/>
            <person name="Suzuki K."/>
            <person name="Fujimura T."/>
            <person name="Shinshi H."/>
        </authorList>
    </citation>
    <scope>GENE FAMILY</scope>
    <scope>NOMENCLATURE</scope>
</reference>
<keyword id="KW-0010">Activator</keyword>
<keyword id="KW-0238">DNA-binding</keyword>
<keyword id="KW-0539">Nucleus</keyword>
<keyword id="KW-1185">Reference proteome</keyword>
<keyword id="KW-0804">Transcription</keyword>
<keyword id="KW-0805">Transcription regulation</keyword>
<feature type="chain" id="PRO_0000297759" description="Ethylene-responsive transcription factor ERF015">
    <location>
        <begin position="1"/>
        <end position="187"/>
    </location>
</feature>
<feature type="DNA-binding region" description="AP2/ERF" evidence="2">
    <location>
        <begin position="26"/>
        <end position="83"/>
    </location>
</feature>
<feature type="sequence conflict" description="In Ref. 1; AAT44951." evidence="3" ref="1">
    <original>S</original>
    <variation>R</variation>
    <location>
        <position position="174"/>
    </location>
</feature>
<feature type="sequence conflict" description="In Ref. 1; AAT44951." evidence="3" ref="1">
    <original>I</original>
    <variation>T</variation>
    <location>
        <position position="187"/>
    </location>
</feature>
<sequence>MPPSPPKSPFISSSLKGAHEDRKFKCYRGVRKRSWGKWVSEIRVPKTGRRIWLGSYDAPEKAARAYDAALFCIRGEKGVYNFPTDKKPQLPEGSVRPLSKLDIQTIATNYASSVVHVPSHATTLPATTQVPSEVPASSDVSASTEITEMVDEYYLPTDATAESIFSVEDLQLDSFLMMDIDWINNLI</sequence>
<accession>Q6NLD5</accession>
<accession>O65544</accession>
<accession>Q6J9P1</accession>
<gene>
    <name type="primary">ERF015</name>
    <name type="ordered locus">At4g31060</name>
    <name type="ORF">F6I18.30</name>
</gene>
<dbReference type="EMBL" id="AY560884">
    <property type="protein sequence ID" value="AAT44951.1"/>
    <property type="molecule type" value="mRNA"/>
</dbReference>
<dbReference type="EMBL" id="AL022198">
    <property type="protein sequence ID" value="CAA18187.1"/>
    <property type="status" value="ALT_SEQ"/>
    <property type="molecule type" value="Genomic_DNA"/>
</dbReference>
<dbReference type="EMBL" id="AL161578">
    <property type="protein sequence ID" value="CAB79824.1"/>
    <property type="status" value="ALT_SEQ"/>
    <property type="molecule type" value="Genomic_DNA"/>
</dbReference>
<dbReference type="EMBL" id="CP002687">
    <property type="protein sequence ID" value="AEE85852.1"/>
    <property type="molecule type" value="Genomic_DNA"/>
</dbReference>
<dbReference type="EMBL" id="BT011774">
    <property type="protein sequence ID" value="AAS65945.1"/>
    <property type="molecule type" value="mRNA"/>
</dbReference>
<dbReference type="EMBL" id="BT012399">
    <property type="protein sequence ID" value="AAS88789.1"/>
    <property type="molecule type" value="mRNA"/>
</dbReference>
<dbReference type="PIR" id="G85363">
    <property type="entry name" value="G85363"/>
</dbReference>
<dbReference type="RefSeq" id="NP_567867.1">
    <property type="nucleotide sequence ID" value="NM_119256.5"/>
</dbReference>
<dbReference type="SMR" id="Q6NLD5"/>
<dbReference type="BioGRID" id="14520">
    <property type="interactions" value="2"/>
</dbReference>
<dbReference type="FunCoup" id="Q6NLD5">
    <property type="interactions" value="5"/>
</dbReference>
<dbReference type="IntAct" id="Q6NLD5">
    <property type="interactions" value="3"/>
</dbReference>
<dbReference type="STRING" id="3702.Q6NLD5"/>
<dbReference type="PaxDb" id="3702-AT4G31060.1"/>
<dbReference type="ProteomicsDB" id="220676"/>
<dbReference type="EnsemblPlants" id="AT4G31060.1">
    <property type="protein sequence ID" value="AT4G31060.1"/>
    <property type="gene ID" value="AT4G31060"/>
</dbReference>
<dbReference type="GeneID" id="829233"/>
<dbReference type="Gramene" id="AT4G31060.1">
    <property type="protein sequence ID" value="AT4G31060.1"/>
    <property type="gene ID" value="AT4G31060"/>
</dbReference>
<dbReference type="KEGG" id="ath:AT4G31060"/>
<dbReference type="Araport" id="AT4G31060"/>
<dbReference type="TAIR" id="AT4G31060"/>
<dbReference type="eggNOG" id="ENOG502S1ZE">
    <property type="taxonomic scope" value="Eukaryota"/>
</dbReference>
<dbReference type="HOGENOM" id="CLU_063331_7_2_1"/>
<dbReference type="InParanoid" id="Q6NLD5"/>
<dbReference type="OMA" id="TDWIADF"/>
<dbReference type="OrthoDB" id="1918918at2759"/>
<dbReference type="PhylomeDB" id="Q6NLD5"/>
<dbReference type="PRO" id="PR:Q6NLD5"/>
<dbReference type="Proteomes" id="UP000006548">
    <property type="component" value="Chromosome 4"/>
</dbReference>
<dbReference type="ExpressionAtlas" id="Q6NLD5">
    <property type="expression patterns" value="baseline and differential"/>
</dbReference>
<dbReference type="GO" id="GO:0005634">
    <property type="term" value="C:nucleus"/>
    <property type="evidence" value="ECO:0007669"/>
    <property type="project" value="UniProtKB-SubCell"/>
</dbReference>
<dbReference type="GO" id="GO:0003700">
    <property type="term" value="F:DNA-binding transcription factor activity"/>
    <property type="evidence" value="ECO:0000250"/>
    <property type="project" value="TAIR"/>
</dbReference>
<dbReference type="GO" id="GO:0000976">
    <property type="term" value="F:transcription cis-regulatory region binding"/>
    <property type="evidence" value="ECO:0000353"/>
    <property type="project" value="TAIR"/>
</dbReference>
<dbReference type="CDD" id="cd00018">
    <property type="entry name" value="AP2"/>
    <property type="match status" value="1"/>
</dbReference>
<dbReference type="FunFam" id="3.30.730.10:FF:000001">
    <property type="entry name" value="Ethylene-responsive transcription factor 2"/>
    <property type="match status" value="1"/>
</dbReference>
<dbReference type="Gene3D" id="3.30.730.10">
    <property type="entry name" value="AP2/ERF domain"/>
    <property type="match status" value="1"/>
</dbReference>
<dbReference type="InterPro" id="IPR001471">
    <property type="entry name" value="AP2/ERF_dom"/>
</dbReference>
<dbReference type="InterPro" id="IPR036955">
    <property type="entry name" value="AP2/ERF_dom_sf"/>
</dbReference>
<dbReference type="InterPro" id="IPR051032">
    <property type="entry name" value="AP2/ERF_TF_ERF_subfamily"/>
</dbReference>
<dbReference type="InterPro" id="IPR016177">
    <property type="entry name" value="DNA-bd_dom_sf"/>
</dbReference>
<dbReference type="PANTHER" id="PTHR31985:SF290">
    <property type="entry name" value="ETHYLENE-RESPONSIVE TRANSCRIPTION FACTOR ERF015"/>
    <property type="match status" value="1"/>
</dbReference>
<dbReference type="PANTHER" id="PTHR31985">
    <property type="entry name" value="ETHYLENE-RESPONSIVE TRANSCRIPTION FACTOR ERF042-RELATED"/>
    <property type="match status" value="1"/>
</dbReference>
<dbReference type="Pfam" id="PF00847">
    <property type="entry name" value="AP2"/>
    <property type="match status" value="1"/>
</dbReference>
<dbReference type="PRINTS" id="PR00367">
    <property type="entry name" value="ETHRSPELEMNT"/>
</dbReference>
<dbReference type="SMART" id="SM00380">
    <property type="entry name" value="AP2"/>
    <property type="match status" value="1"/>
</dbReference>
<dbReference type="SUPFAM" id="SSF54171">
    <property type="entry name" value="DNA-binding domain"/>
    <property type="match status" value="1"/>
</dbReference>
<dbReference type="PROSITE" id="PS51032">
    <property type="entry name" value="AP2_ERF"/>
    <property type="match status" value="1"/>
</dbReference>
<proteinExistence type="evidence at transcript level"/>
<organism>
    <name type="scientific">Arabidopsis thaliana</name>
    <name type="common">Mouse-ear cress</name>
    <dbReference type="NCBI Taxonomy" id="3702"/>
    <lineage>
        <taxon>Eukaryota</taxon>
        <taxon>Viridiplantae</taxon>
        <taxon>Streptophyta</taxon>
        <taxon>Embryophyta</taxon>
        <taxon>Tracheophyta</taxon>
        <taxon>Spermatophyta</taxon>
        <taxon>Magnoliopsida</taxon>
        <taxon>eudicotyledons</taxon>
        <taxon>Gunneridae</taxon>
        <taxon>Pentapetalae</taxon>
        <taxon>rosids</taxon>
        <taxon>malvids</taxon>
        <taxon>Brassicales</taxon>
        <taxon>Brassicaceae</taxon>
        <taxon>Camelineae</taxon>
        <taxon>Arabidopsis</taxon>
    </lineage>
</organism>
<evidence type="ECO:0000250" key="1"/>
<evidence type="ECO:0000255" key="2">
    <source>
        <dbReference type="PROSITE-ProRule" id="PRU00366"/>
    </source>
</evidence>
<evidence type="ECO:0000305" key="3"/>
<protein>
    <recommendedName>
        <fullName>Ethylene-responsive transcription factor ERF015</fullName>
    </recommendedName>
</protein>
<name>ERF15_ARATH</name>